<gene>
    <name evidence="9" type="primary">TENT5C</name>
    <name evidence="9" type="synonym">FAM46C</name>
</gene>
<keyword id="KW-0002">3D-structure</keyword>
<keyword id="KW-0963">Cytoplasm</keyword>
<keyword id="KW-0206">Cytoskeleton</keyword>
<keyword id="KW-0945">Host-virus interaction</keyword>
<keyword id="KW-0548">Nucleotidyltransferase</keyword>
<keyword id="KW-0539">Nucleus</keyword>
<keyword id="KW-1267">Proteomics identification</keyword>
<keyword id="KW-1185">Reference proteome</keyword>
<keyword id="KW-0694">RNA-binding</keyword>
<keyword id="KW-0808">Transferase</keyword>
<reference key="1">
    <citation type="journal article" date="2004" name="Nat. Genet.">
        <title>Complete sequencing and characterization of 21,243 full-length human cDNAs.</title>
        <authorList>
            <person name="Ota T."/>
            <person name="Suzuki Y."/>
            <person name="Nishikawa T."/>
            <person name="Otsuki T."/>
            <person name="Sugiyama T."/>
            <person name="Irie R."/>
            <person name="Wakamatsu A."/>
            <person name="Hayashi K."/>
            <person name="Sato H."/>
            <person name="Nagai K."/>
            <person name="Kimura K."/>
            <person name="Makita H."/>
            <person name="Sekine M."/>
            <person name="Obayashi M."/>
            <person name="Nishi T."/>
            <person name="Shibahara T."/>
            <person name="Tanaka T."/>
            <person name="Ishii S."/>
            <person name="Yamamoto J."/>
            <person name="Saito K."/>
            <person name="Kawai Y."/>
            <person name="Isono Y."/>
            <person name="Nakamura Y."/>
            <person name="Nagahari K."/>
            <person name="Murakami K."/>
            <person name="Yasuda T."/>
            <person name="Iwayanagi T."/>
            <person name="Wagatsuma M."/>
            <person name="Shiratori A."/>
            <person name="Sudo H."/>
            <person name="Hosoiri T."/>
            <person name="Kaku Y."/>
            <person name="Kodaira H."/>
            <person name="Kondo H."/>
            <person name="Sugawara M."/>
            <person name="Takahashi M."/>
            <person name="Kanda K."/>
            <person name="Yokoi T."/>
            <person name="Furuya T."/>
            <person name="Kikkawa E."/>
            <person name="Omura Y."/>
            <person name="Abe K."/>
            <person name="Kamihara K."/>
            <person name="Katsuta N."/>
            <person name="Sato K."/>
            <person name="Tanikawa M."/>
            <person name="Yamazaki M."/>
            <person name="Ninomiya K."/>
            <person name="Ishibashi T."/>
            <person name="Yamashita H."/>
            <person name="Murakawa K."/>
            <person name="Fujimori K."/>
            <person name="Tanai H."/>
            <person name="Kimata M."/>
            <person name="Watanabe M."/>
            <person name="Hiraoka S."/>
            <person name="Chiba Y."/>
            <person name="Ishida S."/>
            <person name="Ono Y."/>
            <person name="Takiguchi S."/>
            <person name="Watanabe S."/>
            <person name="Yosida M."/>
            <person name="Hotuta T."/>
            <person name="Kusano J."/>
            <person name="Kanehori K."/>
            <person name="Takahashi-Fujii A."/>
            <person name="Hara H."/>
            <person name="Tanase T.-O."/>
            <person name="Nomura Y."/>
            <person name="Togiya S."/>
            <person name="Komai F."/>
            <person name="Hara R."/>
            <person name="Takeuchi K."/>
            <person name="Arita M."/>
            <person name="Imose N."/>
            <person name="Musashino K."/>
            <person name="Yuuki H."/>
            <person name="Oshima A."/>
            <person name="Sasaki N."/>
            <person name="Aotsuka S."/>
            <person name="Yoshikawa Y."/>
            <person name="Matsunawa H."/>
            <person name="Ichihara T."/>
            <person name="Shiohata N."/>
            <person name="Sano S."/>
            <person name="Moriya S."/>
            <person name="Momiyama H."/>
            <person name="Satoh N."/>
            <person name="Takami S."/>
            <person name="Terashima Y."/>
            <person name="Suzuki O."/>
            <person name="Nakagawa S."/>
            <person name="Senoh A."/>
            <person name="Mizoguchi H."/>
            <person name="Goto Y."/>
            <person name="Shimizu F."/>
            <person name="Wakebe H."/>
            <person name="Hishigaki H."/>
            <person name="Watanabe T."/>
            <person name="Sugiyama A."/>
            <person name="Takemoto M."/>
            <person name="Kawakami B."/>
            <person name="Yamazaki M."/>
            <person name="Watanabe K."/>
            <person name="Kumagai A."/>
            <person name="Itakura S."/>
            <person name="Fukuzumi Y."/>
            <person name="Fujimori Y."/>
            <person name="Komiyama M."/>
            <person name="Tashiro H."/>
            <person name="Tanigami A."/>
            <person name="Fujiwara T."/>
            <person name="Ono T."/>
            <person name="Yamada K."/>
            <person name="Fujii Y."/>
            <person name="Ozaki K."/>
            <person name="Hirao M."/>
            <person name="Ohmori Y."/>
            <person name="Kawabata A."/>
            <person name="Hikiji T."/>
            <person name="Kobatake N."/>
            <person name="Inagaki H."/>
            <person name="Ikema Y."/>
            <person name="Okamoto S."/>
            <person name="Okitani R."/>
            <person name="Kawakami T."/>
            <person name="Noguchi S."/>
            <person name="Itoh T."/>
            <person name="Shigeta K."/>
            <person name="Senba T."/>
            <person name="Matsumura K."/>
            <person name="Nakajima Y."/>
            <person name="Mizuno T."/>
            <person name="Morinaga M."/>
            <person name="Sasaki M."/>
            <person name="Togashi T."/>
            <person name="Oyama M."/>
            <person name="Hata H."/>
            <person name="Watanabe M."/>
            <person name="Komatsu T."/>
            <person name="Mizushima-Sugano J."/>
            <person name="Satoh T."/>
            <person name="Shirai Y."/>
            <person name="Takahashi Y."/>
            <person name="Nakagawa K."/>
            <person name="Okumura K."/>
            <person name="Nagase T."/>
            <person name="Nomura N."/>
            <person name="Kikuchi H."/>
            <person name="Masuho Y."/>
            <person name="Yamashita R."/>
            <person name="Nakai K."/>
            <person name="Yada T."/>
            <person name="Nakamura Y."/>
            <person name="Ohara O."/>
            <person name="Isogai T."/>
            <person name="Sugano S."/>
        </authorList>
    </citation>
    <scope>NUCLEOTIDE SEQUENCE [LARGE SCALE MRNA]</scope>
    <source>
        <tissue>Colon mucosa</tissue>
    </source>
</reference>
<reference key="2">
    <citation type="journal article" date="2006" name="Nature">
        <title>The DNA sequence and biological annotation of human chromosome 1.</title>
        <authorList>
            <person name="Gregory S.G."/>
            <person name="Barlow K.F."/>
            <person name="McLay K.E."/>
            <person name="Kaul R."/>
            <person name="Swarbreck D."/>
            <person name="Dunham A."/>
            <person name="Scott C.E."/>
            <person name="Howe K.L."/>
            <person name="Woodfine K."/>
            <person name="Spencer C.C.A."/>
            <person name="Jones M.C."/>
            <person name="Gillson C."/>
            <person name="Searle S."/>
            <person name="Zhou Y."/>
            <person name="Kokocinski F."/>
            <person name="McDonald L."/>
            <person name="Evans R."/>
            <person name="Phillips K."/>
            <person name="Atkinson A."/>
            <person name="Cooper R."/>
            <person name="Jones C."/>
            <person name="Hall R.E."/>
            <person name="Andrews T.D."/>
            <person name="Lloyd C."/>
            <person name="Ainscough R."/>
            <person name="Almeida J.P."/>
            <person name="Ambrose K.D."/>
            <person name="Anderson F."/>
            <person name="Andrew R.W."/>
            <person name="Ashwell R.I.S."/>
            <person name="Aubin K."/>
            <person name="Babbage A.K."/>
            <person name="Bagguley C.L."/>
            <person name="Bailey J."/>
            <person name="Beasley H."/>
            <person name="Bethel G."/>
            <person name="Bird C.P."/>
            <person name="Bray-Allen S."/>
            <person name="Brown J.Y."/>
            <person name="Brown A.J."/>
            <person name="Buckley D."/>
            <person name="Burton J."/>
            <person name="Bye J."/>
            <person name="Carder C."/>
            <person name="Chapman J.C."/>
            <person name="Clark S.Y."/>
            <person name="Clarke G."/>
            <person name="Clee C."/>
            <person name="Cobley V."/>
            <person name="Collier R.E."/>
            <person name="Corby N."/>
            <person name="Coville G.J."/>
            <person name="Davies J."/>
            <person name="Deadman R."/>
            <person name="Dunn M."/>
            <person name="Earthrowl M."/>
            <person name="Ellington A.G."/>
            <person name="Errington H."/>
            <person name="Frankish A."/>
            <person name="Frankland J."/>
            <person name="French L."/>
            <person name="Garner P."/>
            <person name="Garnett J."/>
            <person name="Gay L."/>
            <person name="Ghori M.R.J."/>
            <person name="Gibson R."/>
            <person name="Gilby L.M."/>
            <person name="Gillett W."/>
            <person name="Glithero R.J."/>
            <person name="Grafham D.V."/>
            <person name="Griffiths C."/>
            <person name="Griffiths-Jones S."/>
            <person name="Grocock R."/>
            <person name="Hammond S."/>
            <person name="Harrison E.S.I."/>
            <person name="Hart E."/>
            <person name="Haugen E."/>
            <person name="Heath P.D."/>
            <person name="Holmes S."/>
            <person name="Holt K."/>
            <person name="Howden P.J."/>
            <person name="Hunt A.R."/>
            <person name="Hunt S.E."/>
            <person name="Hunter G."/>
            <person name="Isherwood J."/>
            <person name="James R."/>
            <person name="Johnson C."/>
            <person name="Johnson D."/>
            <person name="Joy A."/>
            <person name="Kay M."/>
            <person name="Kershaw J.K."/>
            <person name="Kibukawa M."/>
            <person name="Kimberley A.M."/>
            <person name="King A."/>
            <person name="Knights A.J."/>
            <person name="Lad H."/>
            <person name="Laird G."/>
            <person name="Lawlor S."/>
            <person name="Leongamornlert D.A."/>
            <person name="Lloyd D.M."/>
            <person name="Loveland J."/>
            <person name="Lovell J."/>
            <person name="Lush M.J."/>
            <person name="Lyne R."/>
            <person name="Martin S."/>
            <person name="Mashreghi-Mohammadi M."/>
            <person name="Matthews L."/>
            <person name="Matthews N.S.W."/>
            <person name="McLaren S."/>
            <person name="Milne S."/>
            <person name="Mistry S."/>
            <person name="Moore M.J.F."/>
            <person name="Nickerson T."/>
            <person name="O'Dell C.N."/>
            <person name="Oliver K."/>
            <person name="Palmeiri A."/>
            <person name="Palmer S.A."/>
            <person name="Parker A."/>
            <person name="Patel D."/>
            <person name="Pearce A.V."/>
            <person name="Peck A.I."/>
            <person name="Pelan S."/>
            <person name="Phelps K."/>
            <person name="Phillimore B.J."/>
            <person name="Plumb R."/>
            <person name="Rajan J."/>
            <person name="Raymond C."/>
            <person name="Rouse G."/>
            <person name="Saenphimmachak C."/>
            <person name="Sehra H.K."/>
            <person name="Sheridan E."/>
            <person name="Shownkeen R."/>
            <person name="Sims S."/>
            <person name="Skuce C.D."/>
            <person name="Smith M."/>
            <person name="Steward C."/>
            <person name="Subramanian S."/>
            <person name="Sycamore N."/>
            <person name="Tracey A."/>
            <person name="Tromans A."/>
            <person name="Van Helmond Z."/>
            <person name="Wall M."/>
            <person name="Wallis J.M."/>
            <person name="White S."/>
            <person name="Whitehead S.L."/>
            <person name="Wilkinson J.E."/>
            <person name="Willey D.L."/>
            <person name="Williams H."/>
            <person name="Wilming L."/>
            <person name="Wray P.W."/>
            <person name="Wu Z."/>
            <person name="Coulson A."/>
            <person name="Vaudin M."/>
            <person name="Sulston J.E."/>
            <person name="Durbin R.M."/>
            <person name="Hubbard T."/>
            <person name="Wooster R."/>
            <person name="Dunham I."/>
            <person name="Carter N.P."/>
            <person name="McVean G."/>
            <person name="Ross M.T."/>
            <person name="Harrow J."/>
            <person name="Olson M.V."/>
            <person name="Beck S."/>
            <person name="Rogers J."/>
            <person name="Bentley D.R."/>
        </authorList>
    </citation>
    <scope>NUCLEOTIDE SEQUENCE [LARGE SCALE GENOMIC DNA]</scope>
</reference>
<reference key="3">
    <citation type="journal article" date="2004" name="Genome Res.">
        <title>The status, quality, and expansion of the NIH full-length cDNA project: the Mammalian Gene Collection (MGC).</title>
        <authorList>
            <consortium name="The MGC Project Team"/>
        </authorList>
    </citation>
    <scope>NUCLEOTIDE SEQUENCE [LARGE SCALE MRNA]</scope>
    <source>
        <tissue>Testis</tissue>
    </source>
</reference>
<reference key="4">
    <citation type="journal article" date="2011" name="Nature">
        <title>A diverse range of gene products are effectors of the type I interferon antiviral response.</title>
        <authorList>
            <person name="Schoggins J.W."/>
            <person name="Wilson S.J."/>
            <person name="Panis M."/>
            <person name="Murphy M.Y."/>
            <person name="Jones C.T."/>
            <person name="Bieniasz P."/>
            <person name="Rice C.M."/>
        </authorList>
    </citation>
    <scope>FUNCTION (MICROBIAL INFECTION)</scope>
    <scope>INDUCTION</scope>
</reference>
<reference key="5">
    <citation type="journal article" date="2017" name="Nat. Commun.">
        <title>The non-canonical poly(A) polymerase FAM46C acts as an onco-suppressor in multiple myeloma.</title>
        <authorList>
            <person name="Mroczek S."/>
            <person name="Chlebowska J."/>
            <person name="Kulinski T.M."/>
            <person name="Gewartowska O."/>
            <person name="Gruchota J."/>
            <person name="Cysewski D."/>
            <person name="Liudkovska V."/>
            <person name="Borsuk E."/>
            <person name="Nowis D."/>
            <person name="Dziembowski A."/>
        </authorList>
    </citation>
    <scope>FUNCTION</scope>
    <scope>SUBCELLULAR LOCATION</scope>
    <scope>RNA-BINDING</scope>
    <scope>INTERACTION WITH BCCIP AND PABPC1</scope>
    <scope>MUTAGENESIS OF 90-ASP--ASP-92</scope>
    <scope>CATALYTIC ACTIVITY</scope>
</reference>
<reference key="6">
    <citation type="journal article" date="2020" name="Nucleic Acids Res.">
        <title>FAM46B is a prokaryotic-like cytoplasmic poly(A) polymerase essential in human embryonic stem cells.</title>
        <authorList>
            <person name="Hu J.L."/>
            <person name="Liang H."/>
            <person name="Zhang H."/>
            <person name="Yang M.Z."/>
            <person name="Sun W."/>
            <person name="Zhang P."/>
            <person name="Luo L."/>
            <person name="Feng J.X."/>
            <person name="Bai H."/>
            <person name="Liu F."/>
            <person name="Zhang T."/>
            <person name="Yang J.Y."/>
            <person name="Gao Q."/>
            <person name="Long Y."/>
            <person name="Ma X.Y."/>
            <person name="Chen Y."/>
            <person name="Zhong Q."/>
            <person name="Yu B."/>
            <person name="Liao S."/>
            <person name="Wang Y."/>
            <person name="Zhao Y."/>
            <person name="Zeng M.S."/>
            <person name="Cao N."/>
            <person name="Wang J."/>
            <person name="Chen W."/>
            <person name="Yang H.T."/>
            <person name="Gao S."/>
        </authorList>
    </citation>
    <scope>FUNCTION</scope>
    <scope>CATALYTIC ACTIVITY</scope>
</reference>
<reference key="7">
    <citation type="journal article" date="2021" name="Cancer Commun. (Lond)">
        <title>Structural and functional characterization of multiple myeloma associated cytoplasmic poly(A) polymerase FAM46C.</title>
        <authorList>
            <person name="Zhang H."/>
            <person name="Zhang S.H."/>
            <person name="Hu J.L."/>
            <person name="Wu Y.T."/>
            <person name="Ma X.Y."/>
            <person name="Chen Y."/>
            <person name="Yu B."/>
            <person name="Liao S."/>
            <person name="Huang H."/>
            <person name="Gao S."/>
        </authorList>
    </citation>
    <scope>CATALYTIC ACTIVITY</scope>
    <scope>FUNCTION</scope>
</reference>
<reference evidence="10 11 12 13" key="8">
    <citation type="journal article" date="2020" name="Structure">
        <title>Structural and Functional Analyses of the FAM46C/Plk4 Complex.</title>
        <authorList>
            <person name="Chen H."/>
            <person name="Lu D."/>
            <person name="Shang G."/>
            <person name="Gao G."/>
            <person name="Zhang X."/>
        </authorList>
    </citation>
    <scope>X-RAY CRYSTALLOGRAPHY (2.85 ANGSTROMS) OF 14-358 IN COMPLEXES WITH PLK4 AND CEP192</scope>
    <scope>INTERACTION WITH PLK4</scope>
    <scope>MUTAGENESIS OF LYS-144; CYS-146; GLU-166; CYS-320 AND LEU-321</scope>
    <scope>SUBCELLULAR LOCATION</scope>
</reference>
<name>TET5C_HUMAN</name>
<dbReference type="EC" id="2.7.7.19" evidence="2 3"/>
<dbReference type="EMBL" id="AK000209">
    <property type="protein sequence ID" value="BAA91010.1"/>
    <property type="molecule type" value="mRNA"/>
</dbReference>
<dbReference type="EMBL" id="AL365331">
    <property type="status" value="NOT_ANNOTATED_CDS"/>
    <property type="molecule type" value="Genomic_DNA"/>
</dbReference>
<dbReference type="EMBL" id="BC036516">
    <property type="protein sequence ID" value="AAH36516.3"/>
    <property type="molecule type" value="mRNA"/>
</dbReference>
<dbReference type="EMBL" id="BC131726">
    <property type="protein sequence ID" value="AAI31727.1"/>
    <property type="molecule type" value="mRNA"/>
</dbReference>
<dbReference type="CCDS" id="CCDS896.1"/>
<dbReference type="RefSeq" id="NP_060179.2">
    <property type="nucleotide sequence ID" value="NM_017709.3"/>
</dbReference>
<dbReference type="PDB" id="6W36">
    <property type="method" value="X-ray"/>
    <property type="resolution" value="2.85 A"/>
    <property type="chains" value="A=14-358"/>
</dbReference>
<dbReference type="PDB" id="6W38">
    <property type="method" value="X-ray"/>
    <property type="resolution" value="4.48 A"/>
    <property type="chains" value="A=14-358"/>
</dbReference>
<dbReference type="PDB" id="6W3I">
    <property type="method" value="X-ray"/>
    <property type="resolution" value="3.80 A"/>
    <property type="chains" value="A=14-358"/>
</dbReference>
<dbReference type="PDB" id="6W3J">
    <property type="method" value="X-ray"/>
    <property type="resolution" value="4.38 A"/>
    <property type="chains" value="A=14-358"/>
</dbReference>
<dbReference type="PDB" id="8EQB">
    <property type="method" value="EM"/>
    <property type="resolution" value="6.50 A"/>
    <property type="chains" value="B/E/H/K=15-214"/>
</dbReference>
<dbReference type="PDBsum" id="6W36"/>
<dbReference type="PDBsum" id="6W38"/>
<dbReference type="PDBsum" id="6W3I"/>
<dbReference type="PDBsum" id="6W3J"/>
<dbReference type="PDBsum" id="8EQB"/>
<dbReference type="EMDB" id="EMD-28536"/>
<dbReference type="SMR" id="Q5VWP2"/>
<dbReference type="BioGRID" id="120205">
    <property type="interactions" value="138"/>
</dbReference>
<dbReference type="CORUM" id="Q5VWP2"/>
<dbReference type="FunCoup" id="Q5VWP2">
    <property type="interactions" value="2068"/>
</dbReference>
<dbReference type="IntAct" id="Q5VWP2">
    <property type="interactions" value="9"/>
</dbReference>
<dbReference type="STRING" id="9606.ENSP00000358458"/>
<dbReference type="iPTMnet" id="Q5VWP2"/>
<dbReference type="PhosphoSitePlus" id="Q5VWP2"/>
<dbReference type="BioMuta" id="FAM46C"/>
<dbReference type="DMDM" id="117940143"/>
<dbReference type="jPOST" id="Q5VWP2"/>
<dbReference type="MassIVE" id="Q5VWP2"/>
<dbReference type="PaxDb" id="9606-ENSP00000358458"/>
<dbReference type="PeptideAtlas" id="Q5VWP2"/>
<dbReference type="ProteomicsDB" id="65547"/>
<dbReference type="Antibodypedia" id="33893">
    <property type="antibodies" value="106 antibodies from 20 providers"/>
</dbReference>
<dbReference type="DNASU" id="54855"/>
<dbReference type="Ensembl" id="ENST00000369448.4">
    <property type="protein sequence ID" value="ENSP00000358458.3"/>
    <property type="gene ID" value="ENSG00000183508.5"/>
</dbReference>
<dbReference type="GeneID" id="54855"/>
<dbReference type="KEGG" id="hsa:54855"/>
<dbReference type="MANE-Select" id="ENST00000369448.4">
    <property type="protein sequence ID" value="ENSP00000358458.3"/>
    <property type="RefSeq nucleotide sequence ID" value="NM_017709.4"/>
    <property type="RefSeq protein sequence ID" value="NP_060179.2"/>
</dbReference>
<dbReference type="UCSC" id="uc001ehe.4">
    <property type="organism name" value="human"/>
</dbReference>
<dbReference type="AGR" id="HGNC:24712"/>
<dbReference type="CTD" id="54855"/>
<dbReference type="DisGeNET" id="54855"/>
<dbReference type="GeneCards" id="TENT5C"/>
<dbReference type="HGNC" id="HGNC:24712">
    <property type="gene designation" value="TENT5C"/>
</dbReference>
<dbReference type="HPA" id="ENSG00000183508">
    <property type="expression patterns" value="Tissue enhanced (bone)"/>
</dbReference>
<dbReference type="MalaCards" id="TENT5C"/>
<dbReference type="MIM" id="613952">
    <property type="type" value="gene"/>
</dbReference>
<dbReference type="neXtProt" id="NX_Q5VWP2"/>
<dbReference type="OpenTargets" id="ENSG00000183508"/>
<dbReference type="PharmGKB" id="PA134955264"/>
<dbReference type="VEuPathDB" id="HostDB:ENSG00000183508"/>
<dbReference type="eggNOG" id="KOG3852">
    <property type="taxonomic scope" value="Eukaryota"/>
</dbReference>
<dbReference type="GeneTree" id="ENSGT00940000158856"/>
<dbReference type="HOGENOM" id="CLU_008115_2_0_1"/>
<dbReference type="InParanoid" id="Q5VWP2"/>
<dbReference type="OMA" id="TWDQVSR"/>
<dbReference type="OrthoDB" id="10065073at2759"/>
<dbReference type="PAN-GO" id="Q5VWP2">
    <property type="GO annotations" value="2 GO annotations based on evolutionary models"/>
</dbReference>
<dbReference type="PhylomeDB" id="Q5VWP2"/>
<dbReference type="TreeFam" id="TF315239"/>
<dbReference type="BRENDA" id="2.7.7.19">
    <property type="organism ID" value="2681"/>
</dbReference>
<dbReference type="PathwayCommons" id="Q5VWP2"/>
<dbReference type="SignaLink" id="Q5VWP2"/>
<dbReference type="BioGRID-ORCS" id="54855">
    <property type="hits" value="10 hits in 1158 CRISPR screens"/>
</dbReference>
<dbReference type="GenomeRNAi" id="54855"/>
<dbReference type="Pharos" id="Q5VWP2">
    <property type="development level" value="Tbio"/>
</dbReference>
<dbReference type="PRO" id="PR:Q5VWP2"/>
<dbReference type="Proteomes" id="UP000005640">
    <property type="component" value="Chromosome 1"/>
</dbReference>
<dbReference type="RNAct" id="Q5VWP2">
    <property type="molecule type" value="protein"/>
</dbReference>
<dbReference type="Bgee" id="ENSG00000183508">
    <property type="expression patterns" value="Expressed in secondary oocyte and 178 other cell types or tissues"/>
</dbReference>
<dbReference type="GO" id="GO:0005813">
    <property type="term" value="C:centrosome"/>
    <property type="evidence" value="ECO:0000314"/>
    <property type="project" value="UniProtKB"/>
</dbReference>
<dbReference type="GO" id="GO:0005737">
    <property type="term" value="C:cytoplasm"/>
    <property type="evidence" value="ECO:0000314"/>
    <property type="project" value="UniProtKB"/>
</dbReference>
<dbReference type="GO" id="GO:0005654">
    <property type="term" value="C:nucleoplasm"/>
    <property type="evidence" value="ECO:0000314"/>
    <property type="project" value="HPA"/>
</dbReference>
<dbReference type="GO" id="GO:0005634">
    <property type="term" value="C:nucleus"/>
    <property type="evidence" value="ECO:0000314"/>
    <property type="project" value="UniProtKB"/>
</dbReference>
<dbReference type="GO" id="GO:1990817">
    <property type="term" value="F:poly(A) RNA polymerase activity"/>
    <property type="evidence" value="ECO:0000314"/>
    <property type="project" value="UniProtKB"/>
</dbReference>
<dbReference type="GO" id="GO:0003723">
    <property type="term" value="F:RNA binding"/>
    <property type="evidence" value="ECO:0007669"/>
    <property type="project" value="UniProtKB-KW"/>
</dbReference>
<dbReference type="GO" id="GO:0001701">
    <property type="term" value="P:in utero embryonic development"/>
    <property type="evidence" value="ECO:0007669"/>
    <property type="project" value="Ensembl"/>
</dbReference>
<dbReference type="GO" id="GO:0048255">
    <property type="term" value="P:mRNA stabilization"/>
    <property type="evidence" value="ECO:0000314"/>
    <property type="project" value="UniProtKB"/>
</dbReference>
<dbReference type="GO" id="GO:0045596">
    <property type="term" value="P:negative regulation of cell differentiation"/>
    <property type="evidence" value="ECO:0000315"/>
    <property type="project" value="UniProtKB"/>
</dbReference>
<dbReference type="InterPro" id="IPR012937">
    <property type="entry name" value="TET5"/>
</dbReference>
<dbReference type="PANTHER" id="PTHR12974">
    <property type="entry name" value="PRION-LIKE- Q/N-RICH -DOMAIN-BEARING PROTEIN PROTEIN 44"/>
    <property type="match status" value="1"/>
</dbReference>
<dbReference type="PANTHER" id="PTHR12974:SF34">
    <property type="entry name" value="TERMINAL NUCLEOTIDYLTRANSFERASE 5C"/>
    <property type="match status" value="1"/>
</dbReference>
<dbReference type="Pfam" id="PF07984">
    <property type="entry name" value="NTP_transf_7"/>
    <property type="match status" value="1"/>
</dbReference>
<dbReference type="SMART" id="SM01153">
    <property type="entry name" value="DUF1693"/>
    <property type="match status" value="1"/>
</dbReference>
<evidence type="ECO:0000269" key="1">
    <source>
    </source>
</evidence>
<evidence type="ECO:0000269" key="2">
    <source>
    </source>
</evidence>
<evidence type="ECO:0000269" key="3">
    <source>
    </source>
</evidence>
<evidence type="ECO:0000269" key="4">
    <source>
    </source>
</evidence>
<evidence type="ECO:0000269" key="5">
    <source>
    </source>
</evidence>
<evidence type="ECO:0000303" key="6">
    <source>
    </source>
</evidence>
<evidence type="ECO:0000305" key="7"/>
<evidence type="ECO:0000305" key="8">
    <source>
    </source>
</evidence>
<evidence type="ECO:0000312" key="9">
    <source>
        <dbReference type="HGNC" id="HGNC:24712"/>
    </source>
</evidence>
<evidence type="ECO:0007744" key="10">
    <source>
        <dbReference type="PDB" id="6W36"/>
    </source>
</evidence>
<evidence type="ECO:0007744" key="11">
    <source>
        <dbReference type="PDB" id="6W38"/>
    </source>
</evidence>
<evidence type="ECO:0007744" key="12">
    <source>
        <dbReference type="PDB" id="6W3I"/>
    </source>
</evidence>
<evidence type="ECO:0007744" key="13">
    <source>
        <dbReference type="PDB" id="6W3J"/>
    </source>
</evidence>
<evidence type="ECO:0007829" key="14">
    <source>
        <dbReference type="PDB" id="6W36"/>
    </source>
</evidence>
<feature type="chain" id="PRO_0000259933" description="Terminal nucleotidyltransferase 5C">
    <location>
        <begin position="1"/>
        <end position="391"/>
    </location>
</feature>
<feature type="sequence variant" id="VAR_060132" description="In dbSNP:rs1630312.">
    <original>H</original>
    <variation>Q</variation>
    <location>
        <position position="67"/>
    </location>
</feature>
<feature type="mutagenesis site" description="Loss of poly(a) polymerase activity." evidence="2">
    <original>DLD</original>
    <variation>ALA</variation>
    <location>
        <begin position="90"/>
        <end position="92"/>
    </location>
</feature>
<feature type="mutagenesis site" description="Decreases substantially the interaction with PLK4. Weakens binding to PLK4; when associated with E-230 and E-321. Abolishes the inhibitory effect of TENT5C on the cell viability; when associated with E-320 and E-321." evidence="4">
    <original>K</original>
    <variation>P</variation>
    <location>
        <position position="144"/>
    </location>
</feature>
<feature type="mutagenesis site" description="Decreases substantially the interaction with PLK4. Weakens binding to PLK4; when associated with E-230 and E-321." evidence="4">
    <original>C</original>
    <variation>P</variation>
    <location>
        <position position="146"/>
    </location>
</feature>
<feature type="mutagenesis site" description="Does not affect colocalization with PLK4 in centrosome. Increases cell viability." evidence="4">
    <original>E</original>
    <variation>Q</variation>
    <location>
        <position position="166"/>
    </location>
</feature>
<feature type="mutagenesis site" description="Slightly decreases the binding to PLK4; when associated with E-321. Abolishes the inhibitory effect of TENT5C on the cell viability; when associated with P-144 and E-321." evidence="4">
    <original>C</original>
    <variation>E</variation>
    <location>
        <position position="320"/>
    </location>
</feature>
<feature type="mutagenesis site" description="Slightly decreases the binding to PLK4; when associated with E-320. Abolishes the inhibitory effect of TENT5C on the cell viability; when associated with P-144 and E-320." evidence="4">
    <original>L</original>
    <variation>E</variation>
    <location>
        <position position="321"/>
    </location>
</feature>
<feature type="sequence conflict" description="In Ref. 1; BAA91010." evidence="7" ref="1">
    <original>D</original>
    <variation>V</variation>
    <location>
        <position position="150"/>
    </location>
</feature>
<feature type="helix" evidence="14">
    <location>
        <begin position="19"/>
        <end position="29"/>
    </location>
</feature>
<feature type="strand" evidence="14">
    <location>
        <begin position="32"/>
        <end position="35"/>
    </location>
</feature>
<feature type="strand" evidence="14">
    <location>
        <begin position="38"/>
        <end position="40"/>
    </location>
</feature>
<feature type="strand" evidence="14">
    <location>
        <begin position="44"/>
        <end position="47"/>
    </location>
</feature>
<feature type="helix" evidence="14">
    <location>
        <begin position="48"/>
        <end position="62"/>
    </location>
</feature>
<feature type="strand" evidence="14">
    <location>
        <begin position="66"/>
        <end position="72"/>
    </location>
</feature>
<feature type="helix" evidence="14">
    <location>
        <begin position="73"/>
        <end position="80"/>
    </location>
</feature>
<feature type="strand" evidence="14">
    <location>
        <begin position="90"/>
        <end position="97"/>
    </location>
</feature>
<feature type="helix" evidence="14">
    <location>
        <begin position="102"/>
        <end position="116"/>
    </location>
</feature>
<feature type="helix" evidence="14">
    <location>
        <begin position="117"/>
        <end position="119"/>
    </location>
</feature>
<feature type="helix" evidence="14">
    <location>
        <begin position="131"/>
        <end position="138"/>
    </location>
</feature>
<feature type="strand" evidence="14">
    <location>
        <begin position="139"/>
        <end position="149"/>
    </location>
</feature>
<feature type="strand" evidence="14">
    <location>
        <begin position="151"/>
        <end position="157"/>
    </location>
</feature>
<feature type="strand" evidence="14">
    <location>
        <begin position="164"/>
        <end position="172"/>
    </location>
</feature>
<feature type="helix" evidence="14">
    <location>
        <begin position="180"/>
        <end position="182"/>
    </location>
</feature>
<feature type="strand" evidence="14">
    <location>
        <begin position="184"/>
        <end position="187"/>
    </location>
</feature>
<feature type="helix" evidence="14">
    <location>
        <begin position="189"/>
        <end position="196"/>
    </location>
</feature>
<feature type="strand" evidence="14">
    <location>
        <begin position="204"/>
        <end position="206"/>
    </location>
</feature>
<feature type="strand" evidence="14">
    <location>
        <begin position="211"/>
        <end position="217"/>
    </location>
</feature>
<feature type="helix" evidence="14">
    <location>
        <begin position="219"/>
        <end position="227"/>
    </location>
</feature>
<feature type="helix" evidence="14">
    <location>
        <begin position="243"/>
        <end position="252"/>
    </location>
</feature>
<feature type="strand" evidence="14">
    <location>
        <begin position="256"/>
        <end position="258"/>
    </location>
</feature>
<feature type="helix" evidence="14">
    <location>
        <begin position="260"/>
        <end position="277"/>
    </location>
</feature>
<feature type="helix" evidence="14">
    <location>
        <begin position="281"/>
        <end position="295"/>
    </location>
</feature>
<feature type="turn" evidence="14">
    <location>
        <begin position="296"/>
        <end position="298"/>
    </location>
</feature>
<feature type="helix" evidence="14">
    <location>
        <begin position="300"/>
        <end position="317"/>
    </location>
</feature>
<feature type="helix" evidence="14">
    <location>
        <begin position="320"/>
        <end position="322"/>
    </location>
</feature>
<feature type="helix" evidence="14">
    <location>
        <begin position="323"/>
        <end position="340"/>
    </location>
</feature>
<organism>
    <name type="scientific">Homo sapiens</name>
    <name type="common">Human</name>
    <dbReference type="NCBI Taxonomy" id="9606"/>
    <lineage>
        <taxon>Eukaryota</taxon>
        <taxon>Metazoa</taxon>
        <taxon>Chordata</taxon>
        <taxon>Craniata</taxon>
        <taxon>Vertebrata</taxon>
        <taxon>Euteleostomi</taxon>
        <taxon>Mammalia</taxon>
        <taxon>Eutheria</taxon>
        <taxon>Euarchontoglires</taxon>
        <taxon>Primates</taxon>
        <taxon>Haplorrhini</taxon>
        <taxon>Catarrhini</taxon>
        <taxon>Hominidae</taxon>
        <taxon>Homo</taxon>
    </lineage>
</organism>
<accession>Q5VWP2</accession>
<accession>A3KMG2</accession>
<accession>Q8NE25</accession>
<accession>Q9NXK0</accession>
<proteinExistence type="evidence at protein level"/>
<protein>
    <recommendedName>
        <fullName evidence="7">Terminal nucleotidyltransferase 5C</fullName>
        <ecNumber evidence="2 3">2.7.7.19</ecNumber>
    </recommendedName>
    <alternativeName>
        <fullName evidence="6">Non-canonical poly(A) polymerase FAM46C</fullName>
    </alternativeName>
</protein>
<comment type="function">
    <text evidence="2 3 5">Catalyzes the transfer of one adenosine molecule from an ATP to an mRNA poly(A) tail bearing a 3'-OH terminal group and enhances mRNA stability and gene expression (PubMed:28931820, PubMed:32009146, PubMed:34048638). Can also elongate RNA oligos ending with uridine molecule, provided that the sequence is adenosine-rich (PubMed:34048638). Mainly targets mRNAs encoding endoplasmic reticulum-targeted protein (PubMed:28931820).</text>
</comment>
<comment type="function">
    <text evidence="1">(Microbial infection) Seems to enhance replication of some viruses, including yellow fever virus, in response to type I interferon.</text>
</comment>
<comment type="catalytic activity">
    <reaction evidence="2 3 5">
        <text>RNA(n) + ATP = RNA(n)-3'-adenine ribonucleotide + diphosphate</text>
        <dbReference type="Rhea" id="RHEA:11332"/>
        <dbReference type="Rhea" id="RHEA-COMP:14527"/>
        <dbReference type="Rhea" id="RHEA-COMP:17347"/>
        <dbReference type="ChEBI" id="CHEBI:30616"/>
        <dbReference type="ChEBI" id="CHEBI:33019"/>
        <dbReference type="ChEBI" id="CHEBI:140395"/>
        <dbReference type="ChEBI" id="CHEBI:173115"/>
        <dbReference type="EC" id="2.7.7.19"/>
    </reaction>
    <physiologicalReaction direction="left-to-right" evidence="8">
        <dbReference type="Rhea" id="RHEA:11333"/>
    </physiologicalReaction>
</comment>
<comment type="subunit">
    <text evidence="2 4">Interacts with BCCIP and PABPC1; the interaction has no effect on TENT5C poly(A) polymerase function (PubMed:28931820). Interacts with PLK4; this interaction leads to the TENT5C recruitment into the centrosome (PubMed:32433990).</text>
</comment>
<comment type="interaction">
    <interactant intactId="EBI-741787">
        <id>Q5VWP2</id>
    </interactant>
    <interactant intactId="EBI-372094">
        <id>Q9BQY4</id>
        <label>RHOXF2</label>
    </interactant>
    <organismsDiffer>false</organismsDiffer>
    <experiments>3</experiments>
</comment>
<comment type="subcellular location">
    <subcellularLocation>
        <location evidence="2">Nucleus</location>
    </subcellularLocation>
    <subcellularLocation>
        <location evidence="2">Cytoplasm</location>
    </subcellularLocation>
    <subcellularLocation>
        <location evidence="4">Cytoplasm</location>
        <location evidence="4">Cytoskeleton</location>
        <location evidence="4">Microtubule organizing center</location>
        <location evidence="4">Centrosome</location>
    </subcellularLocation>
    <text evidence="4">Recruited into the centrosome through its interaction with PLK4.</text>
</comment>
<comment type="induction">
    <text evidence="1">By type I interferons.</text>
</comment>
<comment type="similarity">
    <text evidence="7">Belongs to the TENT family.</text>
</comment>
<sequence>MAEESSCTRDCMSFSVLNWDQVSRLHEVLTEVVPIHGRGNFPTLEITLKDIVQTVRSRLEEAGIKVHDVRLNGSAAGHVLVKDNGLGCKDLDLIFHVALPTEAEFQLVRDVVLCSLLNFLPEGVNKLKISPVTLKEAYVQKLVKVCTDTDRWSLISLSNKNGKNVELKFVDSIRRQFEFSVDSFQIILDSLLFFYDCSNNPISEHFHPTVIGESMYGDFEEAFDHLQNRLIATKNPEEIRGGGLLKYSNLLVRDFRPTDQEEIKTLERYMCSRFFIDFPDILEQQRKLETYLQNHFAEEERSKYDYLMILRRVVNESTVCLMGHERRQTLNLISLLALRVLAEQNIIPSATNVTCYYQPAPYVSDGNFSNYYVAHPPVTYSQPYPTWLPCN</sequence>